<gene>
    <name evidence="1" type="primary">aspS</name>
    <name type="ordered locus">Reut_A0439</name>
</gene>
<organism>
    <name type="scientific">Cupriavidus pinatubonensis (strain JMP 134 / LMG 1197)</name>
    <name type="common">Cupriavidus necator (strain JMP 134)</name>
    <dbReference type="NCBI Taxonomy" id="264198"/>
    <lineage>
        <taxon>Bacteria</taxon>
        <taxon>Pseudomonadati</taxon>
        <taxon>Pseudomonadota</taxon>
        <taxon>Betaproteobacteria</taxon>
        <taxon>Burkholderiales</taxon>
        <taxon>Burkholderiaceae</taxon>
        <taxon>Cupriavidus</taxon>
    </lineage>
</organism>
<feature type="chain" id="PRO_0000235550" description="Aspartate--tRNA(Asp/Asn) ligase">
    <location>
        <begin position="1"/>
        <end position="602"/>
    </location>
</feature>
<feature type="region of interest" description="Aspartate" evidence="1">
    <location>
        <begin position="199"/>
        <end position="202"/>
    </location>
</feature>
<feature type="binding site" evidence="1">
    <location>
        <position position="175"/>
    </location>
    <ligand>
        <name>L-aspartate</name>
        <dbReference type="ChEBI" id="CHEBI:29991"/>
    </ligand>
</feature>
<feature type="binding site" evidence="1">
    <location>
        <begin position="221"/>
        <end position="223"/>
    </location>
    <ligand>
        <name>ATP</name>
        <dbReference type="ChEBI" id="CHEBI:30616"/>
    </ligand>
</feature>
<feature type="binding site" evidence="1">
    <location>
        <position position="221"/>
    </location>
    <ligand>
        <name>L-aspartate</name>
        <dbReference type="ChEBI" id="CHEBI:29991"/>
    </ligand>
</feature>
<feature type="binding site" evidence="1">
    <location>
        <position position="230"/>
    </location>
    <ligand>
        <name>ATP</name>
        <dbReference type="ChEBI" id="CHEBI:30616"/>
    </ligand>
</feature>
<feature type="binding site" evidence="1">
    <location>
        <position position="458"/>
    </location>
    <ligand>
        <name>L-aspartate</name>
        <dbReference type="ChEBI" id="CHEBI:29991"/>
    </ligand>
</feature>
<feature type="binding site" evidence="1">
    <location>
        <position position="492"/>
    </location>
    <ligand>
        <name>ATP</name>
        <dbReference type="ChEBI" id="CHEBI:30616"/>
    </ligand>
</feature>
<feature type="binding site" evidence="1">
    <location>
        <position position="499"/>
    </location>
    <ligand>
        <name>L-aspartate</name>
        <dbReference type="ChEBI" id="CHEBI:29991"/>
    </ligand>
</feature>
<feature type="binding site" evidence="1">
    <location>
        <begin position="544"/>
        <end position="547"/>
    </location>
    <ligand>
        <name>ATP</name>
        <dbReference type="ChEBI" id="CHEBI:30616"/>
    </ligand>
</feature>
<feature type="site" description="Important for tRNA non-discrimination" evidence="1">
    <location>
        <position position="33"/>
    </location>
</feature>
<feature type="site" description="Important for tRNA non-discrimination" evidence="1">
    <location>
        <position position="84"/>
    </location>
</feature>
<reference key="1">
    <citation type="journal article" date="2010" name="PLoS ONE">
        <title>The complete multipartite genome sequence of Cupriavidus necator JMP134, a versatile pollutant degrader.</title>
        <authorList>
            <person name="Lykidis A."/>
            <person name="Perez-Pantoja D."/>
            <person name="Ledger T."/>
            <person name="Mavromatis K."/>
            <person name="Anderson I.J."/>
            <person name="Ivanova N.N."/>
            <person name="Hooper S.D."/>
            <person name="Lapidus A."/>
            <person name="Lucas S."/>
            <person name="Gonzalez B."/>
            <person name="Kyrpides N.C."/>
        </authorList>
    </citation>
    <scope>NUCLEOTIDE SEQUENCE [LARGE SCALE GENOMIC DNA]</scope>
    <source>
        <strain>JMP134 / LMG 1197</strain>
    </source>
</reference>
<proteinExistence type="inferred from homology"/>
<sequence length="602" mass="68135">MSSMRTHYCGLVTEQLSGQEVALTGWVQRRRDHGGVIFIDLRDREGLVQVVCDPDRPEMFKAAEEIRNEYCIRITGKVRPRPAGTENTNLTSGKIEVLCYELTVLNPSVTPPFQLDDDNLSETTRLTHRVLDLRRPQMQYNLRLRYKVAMEVRKYLDAQGFIDIETPMLGKSTPEGARDYLVPSRVNPGHFFALPQSPQIFKQMLMVSGFDRYYQITKCFRDEDLRADRQPEFTQIDCETSFLTEQEIRDLFEDMMRTVFKNAIDVDLDAKFPVMEFREAMARFGSDKPDLRVKLEFTELTDVMKDVDFKVFSGPANSDNGRVVGLRVPGGGAISRGEIDAYTQFVGIYGAKGLAWVKVNEVAKGRDGLQSPIVKNLHDAAITEILKRTGAQDGDIIFFGADKAKVVNDAIGALRLKIGHSEFGKASGLFEDVWKPLWVVDFPMFEYDEEDARWVAMHHPFTSPKDEHMQYLETDPGKCIAKAYDMVLNGWEMGGGSVRIYRSDIQSKVFRALKINDEEARAKFGYLLDALQYGAPPHGGLAFGLDRIVTMMAGADSIRDVIAFPKTQRAQDLLTQAPSAVDEKQLRELHIRLRATEPKTTV</sequence>
<comment type="function">
    <text evidence="1">Aspartyl-tRNA synthetase with relaxed tRNA specificity since it is able to aspartylate not only its cognate tRNA(Asp) but also tRNA(Asn). Reaction proceeds in two steps: L-aspartate is first activated by ATP to form Asp-AMP and then transferred to the acceptor end of tRNA(Asp/Asn).</text>
</comment>
<comment type="catalytic activity">
    <reaction evidence="1">
        <text>tRNA(Asx) + L-aspartate + ATP = L-aspartyl-tRNA(Asx) + AMP + diphosphate</text>
        <dbReference type="Rhea" id="RHEA:18349"/>
        <dbReference type="Rhea" id="RHEA-COMP:9710"/>
        <dbReference type="Rhea" id="RHEA-COMP:9711"/>
        <dbReference type="ChEBI" id="CHEBI:29991"/>
        <dbReference type="ChEBI" id="CHEBI:30616"/>
        <dbReference type="ChEBI" id="CHEBI:33019"/>
        <dbReference type="ChEBI" id="CHEBI:78442"/>
        <dbReference type="ChEBI" id="CHEBI:78516"/>
        <dbReference type="ChEBI" id="CHEBI:456215"/>
        <dbReference type="EC" id="6.1.1.23"/>
    </reaction>
</comment>
<comment type="subunit">
    <text evidence="1">Homodimer.</text>
</comment>
<comment type="subcellular location">
    <subcellularLocation>
        <location evidence="1">Cytoplasm</location>
    </subcellularLocation>
</comment>
<comment type="similarity">
    <text evidence="1">Belongs to the class-II aminoacyl-tRNA synthetase family. Type 1 subfamily.</text>
</comment>
<dbReference type="EC" id="6.1.1.23" evidence="1"/>
<dbReference type="EMBL" id="CP000090">
    <property type="protein sequence ID" value="AAZ59821.1"/>
    <property type="molecule type" value="Genomic_DNA"/>
</dbReference>
<dbReference type="SMR" id="Q475W2"/>
<dbReference type="STRING" id="264198.Reut_A0439"/>
<dbReference type="KEGG" id="reu:Reut_A0439"/>
<dbReference type="eggNOG" id="COG0173">
    <property type="taxonomic scope" value="Bacteria"/>
</dbReference>
<dbReference type="HOGENOM" id="CLU_014330_3_2_4"/>
<dbReference type="OrthoDB" id="9802326at2"/>
<dbReference type="GO" id="GO:0005737">
    <property type="term" value="C:cytoplasm"/>
    <property type="evidence" value="ECO:0007669"/>
    <property type="project" value="UniProtKB-SubCell"/>
</dbReference>
<dbReference type="GO" id="GO:0004815">
    <property type="term" value="F:aspartate-tRNA ligase activity"/>
    <property type="evidence" value="ECO:0007669"/>
    <property type="project" value="UniProtKB-UniRule"/>
</dbReference>
<dbReference type="GO" id="GO:0050560">
    <property type="term" value="F:aspartate-tRNA(Asn) ligase activity"/>
    <property type="evidence" value="ECO:0007669"/>
    <property type="project" value="UniProtKB-EC"/>
</dbReference>
<dbReference type="GO" id="GO:0005524">
    <property type="term" value="F:ATP binding"/>
    <property type="evidence" value="ECO:0007669"/>
    <property type="project" value="UniProtKB-UniRule"/>
</dbReference>
<dbReference type="GO" id="GO:0003676">
    <property type="term" value="F:nucleic acid binding"/>
    <property type="evidence" value="ECO:0007669"/>
    <property type="project" value="InterPro"/>
</dbReference>
<dbReference type="GO" id="GO:0006422">
    <property type="term" value="P:aspartyl-tRNA aminoacylation"/>
    <property type="evidence" value="ECO:0007669"/>
    <property type="project" value="UniProtKB-UniRule"/>
</dbReference>
<dbReference type="CDD" id="cd00777">
    <property type="entry name" value="AspRS_core"/>
    <property type="match status" value="1"/>
</dbReference>
<dbReference type="CDD" id="cd04317">
    <property type="entry name" value="EcAspRS_like_N"/>
    <property type="match status" value="1"/>
</dbReference>
<dbReference type="Gene3D" id="3.30.930.10">
    <property type="entry name" value="Bira Bifunctional Protein, Domain 2"/>
    <property type="match status" value="1"/>
</dbReference>
<dbReference type="Gene3D" id="3.30.1360.30">
    <property type="entry name" value="GAD-like domain"/>
    <property type="match status" value="1"/>
</dbReference>
<dbReference type="Gene3D" id="2.40.50.140">
    <property type="entry name" value="Nucleic acid-binding proteins"/>
    <property type="match status" value="1"/>
</dbReference>
<dbReference type="HAMAP" id="MF_00044">
    <property type="entry name" value="Asp_tRNA_synth_type1"/>
    <property type="match status" value="1"/>
</dbReference>
<dbReference type="InterPro" id="IPR004364">
    <property type="entry name" value="Aa-tRNA-synt_II"/>
</dbReference>
<dbReference type="InterPro" id="IPR006195">
    <property type="entry name" value="aa-tRNA-synth_II"/>
</dbReference>
<dbReference type="InterPro" id="IPR045864">
    <property type="entry name" value="aa-tRNA-synth_II/BPL/LPL"/>
</dbReference>
<dbReference type="InterPro" id="IPR004524">
    <property type="entry name" value="Asp-tRNA-ligase_1"/>
</dbReference>
<dbReference type="InterPro" id="IPR047089">
    <property type="entry name" value="Asp-tRNA-ligase_1_N"/>
</dbReference>
<dbReference type="InterPro" id="IPR002312">
    <property type="entry name" value="Asp/Asn-tRNA-synth_IIb"/>
</dbReference>
<dbReference type="InterPro" id="IPR047090">
    <property type="entry name" value="AspRS_core"/>
</dbReference>
<dbReference type="InterPro" id="IPR004115">
    <property type="entry name" value="GAD-like_sf"/>
</dbReference>
<dbReference type="InterPro" id="IPR029351">
    <property type="entry name" value="GAD_dom"/>
</dbReference>
<dbReference type="InterPro" id="IPR012340">
    <property type="entry name" value="NA-bd_OB-fold"/>
</dbReference>
<dbReference type="InterPro" id="IPR004365">
    <property type="entry name" value="NA-bd_OB_tRNA"/>
</dbReference>
<dbReference type="NCBIfam" id="TIGR00459">
    <property type="entry name" value="aspS_bact"/>
    <property type="match status" value="1"/>
</dbReference>
<dbReference type="NCBIfam" id="NF001750">
    <property type="entry name" value="PRK00476.1"/>
    <property type="match status" value="1"/>
</dbReference>
<dbReference type="PANTHER" id="PTHR22594:SF5">
    <property type="entry name" value="ASPARTATE--TRNA LIGASE, MITOCHONDRIAL"/>
    <property type="match status" value="1"/>
</dbReference>
<dbReference type="PANTHER" id="PTHR22594">
    <property type="entry name" value="ASPARTYL/LYSYL-TRNA SYNTHETASE"/>
    <property type="match status" value="1"/>
</dbReference>
<dbReference type="Pfam" id="PF02938">
    <property type="entry name" value="GAD"/>
    <property type="match status" value="1"/>
</dbReference>
<dbReference type="Pfam" id="PF00152">
    <property type="entry name" value="tRNA-synt_2"/>
    <property type="match status" value="1"/>
</dbReference>
<dbReference type="Pfam" id="PF01336">
    <property type="entry name" value="tRNA_anti-codon"/>
    <property type="match status" value="1"/>
</dbReference>
<dbReference type="PRINTS" id="PR01042">
    <property type="entry name" value="TRNASYNTHASP"/>
</dbReference>
<dbReference type="SUPFAM" id="SSF55681">
    <property type="entry name" value="Class II aaRS and biotin synthetases"/>
    <property type="match status" value="1"/>
</dbReference>
<dbReference type="SUPFAM" id="SSF55261">
    <property type="entry name" value="GAD domain-like"/>
    <property type="match status" value="1"/>
</dbReference>
<dbReference type="SUPFAM" id="SSF50249">
    <property type="entry name" value="Nucleic acid-binding proteins"/>
    <property type="match status" value="1"/>
</dbReference>
<dbReference type="PROSITE" id="PS50862">
    <property type="entry name" value="AA_TRNA_LIGASE_II"/>
    <property type="match status" value="1"/>
</dbReference>
<protein>
    <recommendedName>
        <fullName evidence="1">Aspartate--tRNA(Asp/Asn) ligase</fullName>
        <ecNumber evidence="1">6.1.1.23</ecNumber>
    </recommendedName>
    <alternativeName>
        <fullName evidence="1">Aspartyl-tRNA synthetase</fullName>
        <shortName evidence="1">AspRS</shortName>
    </alternativeName>
    <alternativeName>
        <fullName evidence="1">Non-discriminating aspartyl-tRNA synthetase</fullName>
        <shortName evidence="1">ND-AspRS</shortName>
    </alternativeName>
</protein>
<keyword id="KW-0030">Aminoacyl-tRNA synthetase</keyword>
<keyword id="KW-0067">ATP-binding</keyword>
<keyword id="KW-0963">Cytoplasm</keyword>
<keyword id="KW-0436">Ligase</keyword>
<keyword id="KW-0547">Nucleotide-binding</keyword>
<keyword id="KW-0648">Protein biosynthesis</keyword>
<accession>Q475W2</accession>
<name>SYDND_CUPPJ</name>
<evidence type="ECO:0000255" key="1">
    <source>
        <dbReference type="HAMAP-Rule" id="MF_00044"/>
    </source>
</evidence>